<proteinExistence type="evidence at protein level"/>
<evidence type="ECO:0000269" key="1">
    <source>
    </source>
</evidence>
<evidence type="ECO:0000269" key="2">
    <source>
    </source>
</evidence>
<evidence type="ECO:0000303" key="3">
    <source>
    </source>
</evidence>
<evidence type="ECO:0000305" key="4"/>
<evidence type="ECO:0000305" key="5">
    <source>
    </source>
</evidence>
<evidence type="ECO:0007744" key="6">
    <source>
        <dbReference type="PDB" id="3O9P"/>
    </source>
</evidence>
<evidence type="ECO:0007744" key="7">
    <source>
        <dbReference type="PDB" id="4TOZ"/>
    </source>
</evidence>
<evidence type="ECO:0007829" key="8">
    <source>
        <dbReference type="PDB" id="4TOZ"/>
    </source>
</evidence>
<dbReference type="EMBL" id="U88242">
    <property type="protein sequence ID" value="AAC38216.1"/>
    <property type="molecule type" value="Genomic_DNA"/>
</dbReference>
<dbReference type="EMBL" id="U00096">
    <property type="protein sequence ID" value="AAC74411.2"/>
    <property type="molecule type" value="Genomic_DNA"/>
</dbReference>
<dbReference type="EMBL" id="AP009048">
    <property type="protein sequence ID" value="BAA14922.2"/>
    <property type="molecule type" value="Genomic_DNA"/>
</dbReference>
<dbReference type="PIR" id="D64882">
    <property type="entry name" value="D64882"/>
</dbReference>
<dbReference type="RefSeq" id="NP_415845.2">
    <property type="nucleotide sequence ID" value="NC_000913.3"/>
</dbReference>
<dbReference type="RefSeq" id="WP_000683020.1">
    <property type="nucleotide sequence ID" value="NZ_STEB01000005.1"/>
</dbReference>
<dbReference type="PDB" id="3O9P">
    <property type="method" value="X-ray"/>
    <property type="resolution" value="2.07 A"/>
    <property type="chains" value="A=23-537"/>
</dbReference>
<dbReference type="PDB" id="4TOZ">
    <property type="method" value="X-ray"/>
    <property type="resolution" value="1.50 A"/>
    <property type="chains" value="A/B=23-537"/>
</dbReference>
<dbReference type="PDBsum" id="3O9P"/>
<dbReference type="PDBsum" id="4TOZ"/>
<dbReference type="SMR" id="P77348"/>
<dbReference type="BioGRID" id="4260155">
    <property type="interactions" value="288"/>
</dbReference>
<dbReference type="ComplexPortal" id="CPX-4343">
    <property type="entry name" value="Murein tripeptide ABC transporter complex"/>
</dbReference>
<dbReference type="ComplexPortal" id="CPX-4346">
    <property type="entry name" value="Heme/dipeptide ABC transporter complex, mppA variant"/>
</dbReference>
<dbReference type="FunCoup" id="P77348">
    <property type="interactions" value="369"/>
</dbReference>
<dbReference type="STRING" id="511145.b1329"/>
<dbReference type="TCDB" id="3.A.1.5.1">
    <property type="family name" value="the atp-binding cassette (abc) superfamily"/>
</dbReference>
<dbReference type="TCDB" id="3.A.1.5.41">
    <property type="family name" value="the atp-binding cassette (abc) superfamily"/>
</dbReference>
<dbReference type="jPOST" id="P77348"/>
<dbReference type="PaxDb" id="511145-b1329"/>
<dbReference type="EnsemblBacteria" id="AAC74411">
    <property type="protein sequence ID" value="AAC74411"/>
    <property type="gene ID" value="b1329"/>
</dbReference>
<dbReference type="GeneID" id="75203446"/>
<dbReference type="GeneID" id="945951"/>
<dbReference type="KEGG" id="ecj:JW1322"/>
<dbReference type="KEGG" id="eco:b1329"/>
<dbReference type="KEGG" id="ecoc:C3026_07785"/>
<dbReference type="PATRIC" id="fig|1411691.4.peg.948"/>
<dbReference type="EchoBASE" id="EB3158"/>
<dbReference type="eggNOG" id="COG4166">
    <property type="taxonomic scope" value="Bacteria"/>
</dbReference>
<dbReference type="HOGENOM" id="CLU_017028_0_3_6"/>
<dbReference type="InParanoid" id="P77348"/>
<dbReference type="OMA" id="SSWGDPQ"/>
<dbReference type="OrthoDB" id="9801912at2"/>
<dbReference type="PhylomeDB" id="P77348"/>
<dbReference type="BioCyc" id="EcoCyc:G6665-MONOMER"/>
<dbReference type="BioCyc" id="MetaCyc:G6665-MONOMER"/>
<dbReference type="EvolutionaryTrace" id="P77348"/>
<dbReference type="PRO" id="PR:P77348"/>
<dbReference type="Proteomes" id="UP000000625">
    <property type="component" value="Chromosome"/>
</dbReference>
<dbReference type="GO" id="GO:0055052">
    <property type="term" value="C:ATP-binding cassette (ABC) transporter complex, substrate-binding subunit-containing"/>
    <property type="evidence" value="ECO:0000303"/>
    <property type="project" value="ComplexPortal"/>
</dbReference>
<dbReference type="GO" id="GO:0016020">
    <property type="term" value="C:membrane"/>
    <property type="evidence" value="ECO:0000303"/>
    <property type="project" value="ComplexPortal"/>
</dbReference>
<dbReference type="GO" id="GO:0030288">
    <property type="term" value="C:outer membrane-bounded periplasmic space"/>
    <property type="evidence" value="ECO:0000314"/>
    <property type="project" value="EcoCyc"/>
</dbReference>
<dbReference type="GO" id="GO:0042597">
    <property type="term" value="C:periplasmic space"/>
    <property type="evidence" value="ECO:0000314"/>
    <property type="project" value="EcoliWiki"/>
</dbReference>
<dbReference type="GO" id="GO:1900750">
    <property type="term" value="F:oligopeptide binding"/>
    <property type="evidence" value="ECO:0000353"/>
    <property type="project" value="EcoCyc"/>
</dbReference>
<dbReference type="GO" id="GO:1904680">
    <property type="term" value="F:peptide transmembrane transporter activity"/>
    <property type="evidence" value="ECO:0000318"/>
    <property type="project" value="GO_Central"/>
</dbReference>
<dbReference type="GO" id="GO:0042938">
    <property type="term" value="P:dipeptide transport"/>
    <property type="evidence" value="ECO:0000303"/>
    <property type="project" value="ComplexPortal"/>
</dbReference>
<dbReference type="GO" id="GO:0035351">
    <property type="term" value="P:heme transmembrane transport"/>
    <property type="evidence" value="ECO:0000303"/>
    <property type="project" value="ComplexPortal"/>
</dbReference>
<dbReference type="GO" id="GO:0015833">
    <property type="term" value="P:peptide transport"/>
    <property type="evidence" value="ECO:0000318"/>
    <property type="project" value="GO_Central"/>
</dbReference>
<dbReference type="GO" id="GO:0015834">
    <property type="term" value="P:peptidoglycan-associated peptide transport"/>
    <property type="evidence" value="ECO:0000269"/>
    <property type="project" value="EcoCyc"/>
</dbReference>
<dbReference type="GO" id="GO:0015031">
    <property type="term" value="P:protein transport"/>
    <property type="evidence" value="ECO:0007669"/>
    <property type="project" value="UniProtKB-KW"/>
</dbReference>
<dbReference type="GO" id="GO:0140207">
    <property type="term" value="P:tripeptide import across plasma membrane"/>
    <property type="evidence" value="ECO:0000303"/>
    <property type="project" value="ComplexPortal"/>
</dbReference>
<dbReference type="GO" id="GO:0042939">
    <property type="term" value="P:tripeptide transport"/>
    <property type="evidence" value="ECO:0000315"/>
    <property type="project" value="EcoliWiki"/>
</dbReference>
<dbReference type="CDD" id="cd08504">
    <property type="entry name" value="PBP2_OppA"/>
    <property type="match status" value="1"/>
</dbReference>
<dbReference type="FunFam" id="3.90.76.10:FF:000001">
    <property type="entry name" value="Oligopeptide ABC transporter substrate-binding protein"/>
    <property type="match status" value="1"/>
</dbReference>
<dbReference type="FunFam" id="3.10.105.10:FF:000001">
    <property type="entry name" value="Oligopeptide ABC transporter, oligopeptide-binding protein"/>
    <property type="match status" value="1"/>
</dbReference>
<dbReference type="Gene3D" id="3.90.76.10">
    <property type="entry name" value="Dipeptide-binding Protein, Domain 1"/>
    <property type="match status" value="1"/>
</dbReference>
<dbReference type="Gene3D" id="3.10.105.10">
    <property type="entry name" value="Dipeptide-binding Protein, Domain 3"/>
    <property type="match status" value="1"/>
</dbReference>
<dbReference type="Gene3D" id="3.40.190.10">
    <property type="entry name" value="Periplasmic binding protein-like II"/>
    <property type="match status" value="1"/>
</dbReference>
<dbReference type="InterPro" id="IPR030678">
    <property type="entry name" value="Peptide/Ni-bd"/>
</dbReference>
<dbReference type="InterPro" id="IPR039424">
    <property type="entry name" value="SBP_5"/>
</dbReference>
<dbReference type="InterPro" id="IPR023765">
    <property type="entry name" value="SBP_5_CS"/>
</dbReference>
<dbReference type="InterPro" id="IPR000914">
    <property type="entry name" value="SBP_5_dom"/>
</dbReference>
<dbReference type="PANTHER" id="PTHR30290">
    <property type="entry name" value="PERIPLASMIC BINDING COMPONENT OF ABC TRANSPORTER"/>
    <property type="match status" value="1"/>
</dbReference>
<dbReference type="PANTHER" id="PTHR30290:SF23">
    <property type="entry name" value="PERIPLASMIC MUREIN PEPTIDE-BINDING PROTEIN"/>
    <property type="match status" value="1"/>
</dbReference>
<dbReference type="Pfam" id="PF00496">
    <property type="entry name" value="SBP_bac_5"/>
    <property type="match status" value="1"/>
</dbReference>
<dbReference type="PIRSF" id="PIRSF002741">
    <property type="entry name" value="MppA"/>
    <property type="match status" value="1"/>
</dbReference>
<dbReference type="SUPFAM" id="SSF53850">
    <property type="entry name" value="Periplasmic binding protein-like II"/>
    <property type="match status" value="1"/>
</dbReference>
<dbReference type="PROSITE" id="PS01040">
    <property type="entry name" value="SBP_BACTERIAL_5"/>
    <property type="match status" value="1"/>
</dbReference>
<organism>
    <name type="scientific">Escherichia coli (strain K12)</name>
    <dbReference type="NCBI Taxonomy" id="83333"/>
    <lineage>
        <taxon>Bacteria</taxon>
        <taxon>Pseudomonadati</taxon>
        <taxon>Pseudomonadota</taxon>
        <taxon>Gammaproteobacteria</taxon>
        <taxon>Enterobacterales</taxon>
        <taxon>Enterobacteriaceae</taxon>
        <taxon>Escherichia</taxon>
    </lineage>
</organism>
<name>MPPA_ECOLI</name>
<accession>P77348</accession>
<keyword id="KW-0002">3D-structure</keyword>
<keyword id="KW-0903">Direct protein sequencing</keyword>
<keyword id="KW-0571">Peptide transport</keyword>
<keyword id="KW-0574">Periplasm</keyword>
<keyword id="KW-0653">Protein transport</keyword>
<keyword id="KW-1185">Reference proteome</keyword>
<keyword id="KW-0732">Signal</keyword>
<keyword id="KW-0813">Transport</keyword>
<reference key="1">
    <citation type="journal article" date="1998" name="J. Bacteriol.">
        <title>MppA, a periplasmic binding protein essential for import of the bacterial cell wall peptide L-alanyl-gamma-D-glutamyl-meso-diaminopimelate.</title>
        <authorList>
            <person name="Park J.T."/>
            <person name="Raychaudhuri D."/>
            <person name="Li H."/>
            <person name="Normark S."/>
            <person name="Mengin-Lecreulx D."/>
        </authorList>
    </citation>
    <scope>NUCLEOTIDE SEQUENCE [GENOMIC DNA]</scope>
    <scope>PROTEIN SEQUENCE OF 23-32</scope>
    <scope>FUNCTION</scope>
    <scope>SUBUNIT</scope>
    <scope>SUBCELLULAR LOCATION</scope>
    <source>
        <strain>K12 / AT980</strain>
    </source>
</reference>
<reference key="2">
    <citation type="journal article" date="1996" name="DNA Res.">
        <title>A 570-kb DNA sequence of the Escherichia coli K-12 genome corresponding to the 28.0-40.1 min region on the linkage map.</title>
        <authorList>
            <person name="Aiba H."/>
            <person name="Baba T."/>
            <person name="Fujita K."/>
            <person name="Hayashi K."/>
            <person name="Inada T."/>
            <person name="Isono K."/>
            <person name="Itoh T."/>
            <person name="Kasai H."/>
            <person name="Kashimoto K."/>
            <person name="Kimura S."/>
            <person name="Kitakawa M."/>
            <person name="Kitagawa M."/>
            <person name="Makino K."/>
            <person name="Miki T."/>
            <person name="Mizobuchi K."/>
            <person name="Mori H."/>
            <person name="Mori T."/>
            <person name="Motomura K."/>
            <person name="Nakade S."/>
            <person name="Nakamura Y."/>
            <person name="Nashimoto H."/>
            <person name="Nishio Y."/>
            <person name="Oshima T."/>
            <person name="Saito N."/>
            <person name="Sampei G."/>
            <person name="Seki Y."/>
            <person name="Sivasundaram S."/>
            <person name="Tagami H."/>
            <person name="Takeda J."/>
            <person name="Takemoto K."/>
            <person name="Takeuchi Y."/>
            <person name="Wada C."/>
            <person name="Yamamoto Y."/>
            <person name="Horiuchi T."/>
        </authorList>
    </citation>
    <scope>NUCLEOTIDE SEQUENCE [LARGE SCALE GENOMIC DNA]</scope>
    <source>
        <strain>K12 / W3110 / ATCC 27325 / DSM 5911</strain>
    </source>
</reference>
<reference key="3">
    <citation type="journal article" date="1997" name="Science">
        <title>The complete genome sequence of Escherichia coli K-12.</title>
        <authorList>
            <person name="Blattner F.R."/>
            <person name="Plunkett G. III"/>
            <person name="Bloch C.A."/>
            <person name="Perna N.T."/>
            <person name="Burland V."/>
            <person name="Riley M."/>
            <person name="Collado-Vides J."/>
            <person name="Glasner J.D."/>
            <person name="Rode C.K."/>
            <person name="Mayhew G.F."/>
            <person name="Gregor J."/>
            <person name="Davis N.W."/>
            <person name="Kirkpatrick H.A."/>
            <person name="Goeden M.A."/>
            <person name="Rose D.J."/>
            <person name="Mau B."/>
            <person name="Shao Y."/>
        </authorList>
    </citation>
    <scope>NUCLEOTIDE SEQUENCE [LARGE SCALE GENOMIC DNA]</scope>
    <source>
        <strain>K12 / MG1655 / ATCC 47076</strain>
    </source>
</reference>
<reference key="4">
    <citation type="journal article" date="2006" name="Mol. Syst. Biol.">
        <title>Highly accurate genome sequences of Escherichia coli K-12 strains MG1655 and W3110.</title>
        <authorList>
            <person name="Hayashi K."/>
            <person name="Morooka N."/>
            <person name="Yamamoto Y."/>
            <person name="Fujita K."/>
            <person name="Isono K."/>
            <person name="Choi S."/>
            <person name="Ohtsubo E."/>
            <person name="Baba T."/>
            <person name="Wanner B.L."/>
            <person name="Mori H."/>
            <person name="Horiuchi T."/>
        </authorList>
    </citation>
    <scope>NUCLEOTIDE SEQUENCE [LARGE SCALE GENOMIC DNA]</scope>
    <source>
        <strain>K12 / W3110 / ATCC 27325 / DSM 5911</strain>
    </source>
</reference>
<reference evidence="6" key="5">
    <citation type="journal article" date="2011" name="J. Biol. Chem.">
        <title>Compensating stereochemical changes allow murein tripeptide to be accommodated in a conventional peptide-binding protein.</title>
        <authorList>
            <person name="Maqbool A."/>
            <person name="Levdikov V.M."/>
            <person name="Blagova E.V."/>
            <person name="Herve M."/>
            <person name="Horler R.S."/>
            <person name="Wilkinson A.J."/>
            <person name="Thomas G.H."/>
        </authorList>
    </citation>
    <scope>X-RAY CRYSTALLOGRAPHY (2.07 ANGSTROMS) OF 23-537 IN COMPLEX WITH L-ALA-GAMMA-D-GLU-MESO-DIAMINOPIMELIC ACID</scope>
    <scope>FUNCTION</scope>
    <scope>MUTAGENESIS OF ALA-296 AND ARG-424</scope>
    <source>
        <strain>K12</strain>
    </source>
</reference>
<reference evidence="7" key="6">
    <citation type="submission" date="2014-06" db="PDB data bank">
        <title>Open Conformation of the E. coli Periplasmic Murein Tripeptide Binding Protein, MppA,at High Resolution.</title>
        <authorList>
            <person name="Bhatt F."/>
            <person name="Patel V."/>
            <person name="Jeffery C.J."/>
        </authorList>
    </citation>
    <scope>X-RAY CRYSTALLOGRAPHY (1.50 ANGSTROMS) OF 23-537</scope>
</reference>
<gene>
    <name evidence="3" type="primary">mppA</name>
    <name type="synonym">ynaH</name>
    <name type="ordered locus">b1329</name>
    <name type="ordered locus">JW1322</name>
</gene>
<comment type="function">
    <text evidence="1 2">Part of the ABC transporter complex MppA-OppBCDF involved in the uptake of the cell wall murein tripeptide L-alanyl-gamma-D-glutamyl-meso-diaminopimelate (PubMed:9495761). Is involved in the recycling of cell wall peptides (PubMed:9495761). Binds the cell wall peptide L-Ala-D-Gly-gamma-meso-diaminopimelic acid (PubMed:21705338, PubMed:9495761). Can also transport ordinary alpha-linked tripeptides such as Pro-Phe-Lys, but with much lower efficiency than OppA (PubMed:9495761). Cannot bind typical tripeptides such as Lys-Glu-Lys, Lys-Lys-Lys or Ala-Ala-Ala (PubMed:21705338).</text>
</comment>
<comment type="subunit">
    <text evidence="5">The complex is composed of two ATP-binding proteins (OppD and OppF), two transmembrane proteins (OppB and OppC) and a solute-binding protein (MppA).</text>
</comment>
<comment type="subcellular location">
    <subcellularLocation>
        <location evidence="2">Periplasm</location>
    </subcellularLocation>
</comment>
<comment type="similarity">
    <text evidence="4">Belongs to the bacterial solute-binding protein 5 family.</text>
</comment>
<protein>
    <recommendedName>
        <fullName evidence="4">Periplasmic murein peptide-binding protein MppA</fullName>
    </recommendedName>
    <alternativeName>
        <fullName evidence="3">Murein peptide permease A</fullName>
    </alternativeName>
</protein>
<sequence>MKHSVSVTCCALLVSSISLSYAAEVPSGTVLAEKQELVRHIKDEPASLDPAKAVGLPEIQVIRDLFEGLVNQNEKGEIVPGVATQWKSNDNRIWTFTLRDNAKWADGTPVTAQDFVYSWQRLVDPKTLSPFAWFAALAGINNAQAIIDGKATPDQLGVTAVDAHTLKIQLDKPLPWFVNLTANFAFFPVQKANVESGKEWTKPGNLIGNGAYVLKERVVNEKLVVVPNTHYWDNAKTVLQKVTFLPINQESAATKRYLAGDIDITESFPKNMYQKLLKDIPGQVYTPPQLGTYYYAFNTQKGPTADQRVRLALSMTIDRRLMTEKVLGTGEKPAWHFTPDVTAGFTPEPSPFEQMSQEELNAQAKTLLSAAGYGPQKPLKLTLLYNTSENHQKIAIAVASMWKKNLGVDVKLQNQEWKTYIDSRNTGNFDVIRASWVGDYNEPSTFLTLLTSTHSGNISRFNNPAYDKVLAQASTENTVKARNADYNAAEKILMEQAPIAPIYQYTNGRLIKPWLKGYPINNPEDVAYSRTMYIVKH</sequence>
<feature type="signal peptide" evidence="2">
    <location>
        <begin position="1"/>
        <end position="22"/>
    </location>
</feature>
<feature type="chain" id="PRO_0000031792" description="Periplasmic murein peptide-binding protein MppA">
    <location>
        <begin position="23"/>
        <end position="537"/>
    </location>
</feature>
<feature type="binding site" evidence="1 6">
    <location>
        <position position="42"/>
    </location>
    <ligand>
        <name>L-alanyl-gamma-D-glutamyl-meso-2,6-diaminopimelate</name>
        <dbReference type="ChEBI" id="CHEBI:61401"/>
    </ligand>
</feature>
<feature type="binding site" evidence="1 6">
    <location>
        <position position="54"/>
    </location>
    <ligand>
        <name>L-alanyl-gamma-D-glutamyl-meso-2,6-diaminopimelate</name>
        <dbReference type="ChEBI" id="CHEBI:61401"/>
    </ligand>
</feature>
<feature type="binding site" evidence="1 6">
    <location>
        <position position="56"/>
    </location>
    <ligand>
        <name>L-alanyl-gamma-D-glutamyl-meso-2,6-diaminopimelate</name>
        <dbReference type="ChEBI" id="CHEBI:61401"/>
    </ligand>
</feature>
<feature type="binding site" evidence="1 6">
    <location>
        <position position="289"/>
    </location>
    <ligand>
        <name>L-alanyl-gamma-D-glutamyl-meso-2,6-diaminopimelate</name>
        <dbReference type="ChEBI" id="CHEBI:61401"/>
    </ligand>
</feature>
<feature type="binding site" evidence="1 6">
    <location>
        <position position="424"/>
    </location>
    <ligand>
        <name>L-alanyl-gamma-D-glutamyl-meso-2,6-diaminopimelate</name>
        <dbReference type="ChEBI" id="CHEBI:61401"/>
    </ligand>
</feature>
<feature type="binding site" evidence="1 6">
    <location>
        <position position="435"/>
    </location>
    <ligand>
        <name>L-alanyl-gamma-D-glutamyl-meso-2,6-diaminopimelate</name>
        <dbReference type="ChEBI" id="CHEBI:61401"/>
    </ligand>
</feature>
<feature type="binding site" evidence="1 6">
    <location>
        <position position="437"/>
    </location>
    <ligand>
        <name>L-alanyl-gamma-D-glutamyl-meso-2,6-diaminopimelate</name>
        <dbReference type="ChEBI" id="CHEBI:61401"/>
    </ligand>
</feature>
<feature type="binding site" evidence="1 6">
    <location>
        <position position="439"/>
    </location>
    <ligand>
        <name>L-alanyl-gamma-D-glutamyl-meso-2,6-diaminopimelate</name>
        <dbReference type="ChEBI" id="CHEBI:61401"/>
    </ligand>
</feature>
<feature type="binding site" evidence="1 6">
    <location>
        <position position="506"/>
    </location>
    <ligand>
        <name>L-alanyl-gamma-D-glutamyl-meso-2,6-diaminopimelate</name>
        <dbReference type="ChEBI" id="CHEBI:61401"/>
    </ligand>
</feature>
<feature type="mutagenesis site" description="Cannot bind murein tripeptide." evidence="1">
    <original>A</original>
    <variation>E</variation>
    <location>
        <position position="296"/>
    </location>
</feature>
<feature type="mutagenesis site" description="Cannot bind murein tripeptide." evidence="1">
    <original>R</original>
    <variation>A</variation>
    <location>
        <position position="424"/>
    </location>
</feature>
<feature type="strand" evidence="8">
    <location>
        <begin position="36"/>
        <end position="43"/>
    </location>
</feature>
<feature type="turn" evidence="8">
    <location>
        <begin position="50"/>
        <end position="52"/>
    </location>
</feature>
<feature type="helix" evidence="8">
    <location>
        <begin position="56"/>
        <end position="65"/>
    </location>
</feature>
<feature type="strand" evidence="8">
    <location>
        <begin position="69"/>
        <end position="72"/>
    </location>
</feature>
<feature type="strand" evidence="8">
    <location>
        <begin position="78"/>
        <end position="87"/>
    </location>
</feature>
<feature type="strand" evidence="8">
    <location>
        <begin position="89"/>
        <end position="98"/>
    </location>
</feature>
<feature type="helix" evidence="8">
    <location>
        <begin position="112"/>
        <end position="123"/>
    </location>
</feature>
<feature type="helix" evidence="8">
    <location>
        <begin position="125"/>
        <end position="127"/>
    </location>
</feature>
<feature type="turn" evidence="8">
    <location>
        <begin position="130"/>
        <end position="132"/>
    </location>
</feature>
<feature type="helix" evidence="8">
    <location>
        <begin position="133"/>
        <end position="137"/>
    </location>
</feature>
<feature type="helix" evidence="8">
    <location>
        <begin position="143"/>
        <end position="147"/>
    </location>
</feature>
<feature type="helix" evidence="8">
    <location>
        <begin position="153"/>
        <end position="155"/>
    </location>
</feature>
<feature type="strand" evidence="8">
    <location>
        <begin position="156"/>
        <end position="162"/>
    </location>
</feature>
<feature type="strand" evidence="8">
    <location>
        <begin position="165"/>
        <end position="172"/>
    </location>
</feature>
<feature type="helix" evidence="8">
    <location>
        <begin position="177"/>
        <end position="180"/>
    </location>
</feature>
<feature type="helix" evidence="8">
    <location>
        <begin position="184"/>
        <end position="186"/>
    </location>
</feature>
<feature type="helix" evidence="8">
    <location>
        <begin position="191"/>
        <end position="194"/>
    </location>
</feature>
<feature type="helix" evidence="8">
    <location>
        <begin position="198"/>
        <end position="201"/>
    </location>
</feature>
<feature type="turn" evidence="8">
    <location>
        <begin position="203"/>
        <end position="205"/>
    </location>
</feature>
<feature type="strand" evidence="8">
    <location>
        <begin position="210"/>
        <end position="218"/>
    </location>
</feature>
<feature type="turn" evidence="8">
    <location>
        <begin position="219"/>
        <end position="221"/>
    </location>
</feature>
<feature type="strand" evidence="8">
    <location>
        <begin position="222"/>
        <end position="227"/>
    </location>
</feature>
<feature type="helix" evidence="8">
    <location>
        <begin position="234"/>
        <end position="236"/>
    </location>
</feature>
<feature type="strand" evidence="8">
    <location>
        <begin position="240"/>
        <end position="246"/>
    </location>
</feature>
<feature type="helix" evidence="8">
    <location>
        <begin position="252"/>
        <end position="258"/>
    </location>
</feature>
<feature type="helix" evidence="8">
    <location>
        <begin position="270"/>
        <end position="279"/>
    </location>
</feature>
<feature type="helix" evidence="8">
    <location>
        <begin position="281"/>
        <end position="283"/>
    </location>
</feature>
<feature type="strand" evidence="8">
    <location>
        <begin position="288"/>
        <end position="297"/>
    </location>
</feature>
<feature type="strand" evidence="8">
    <location>
        <begin position="299"/>
        <end position="302"/>
    </location>
</feature>
<feature type="helix" evidence="8">
    <location>
        <begin position="303"/>
        <end position="305"/>
    </location>
</feature>
<feature type="helix" evidence="8">
    <location>
        <begin position="307"/>
        <end position="315"/>
    </location>
</feature>
<feature type="helix" evidence="8">
    <location>
        <begin position="319"/>
        <end position="324"/>
    </location>
</feature>
<feature type="turn" evidence="8">
    <location>
        <begin position="325"/>
        <end position="327"/>
    </location>
</feature>
<feature type="strand" evidence="8">
    <location>
        <begin position="335"/>
        <end position="338"/>
    </location>
</feature>
<feature type="turn" evidence="8">
    <location>
        <begin position="351"/>
        <end position="354"/>
    </location>
</feature>
<feature type="helix" evidence="8">
    <location>
        <begin position="357"/>
        <end position="370"/>
    </location>
</feature>
<feature type="strand" evidence="8">
    <location>
        <begin position="374"/>
        <end position="377"/>
    </location>
</feature>
<feature type="strand" evidence="8">
    <location>
        <begin position="381"/>
        <end position="387"/>
    </location>
</feature>
<feature type="helix" evidence="8">
    <location>
        <begin position="389"/>
        <end position="406"/>
    </location>
</feature>
<feature type="strand" evidence="8">
    <location>
        <begin position="410"/>
        <end position="415"/>
    </location>
</feature>
<feature type="helix" evidence="8">
    <location>
        <begin position="417"/>
        <end position="426"/>
    </location>
</feature>
<feature type="strand" evidence="8">
    <location>
        <begin position="430"/>
        <end position="437"/>
    </location>
</feature>
<feature type="strand" evidence="8">
    <location>
        <begin position="439"/>
        <end position="442"/>
    </location>
</feature>
<feature type="helix" evidence="8">
    <location>
        <begin position="444"/>
        <end position="447"/>
    </location>
</feature>
<feature type="helix" evidence="8">
    <location>
        <begin position="448"/>
        <end position="450"/>
    </location>
</feature>
<feature type="helix" evidence="8">
    <location>
        <begin position="464"/>
        <end position="473"/>
    </location>
</feature>
<feature type="helix" evidence="8">
    <location>
        <begin position="479"/>
        <end position="496"/>
    </location>
</feature>
<feature type="strand" evidence="8">
    <location>
        <begin position="498"/>
        <end position="506"/>
    </location>
</feature>
<feature type="strand" evidence="8">
    <location>
        <begin position="509"/>
        <end position="511"/>
    </location>
</feature>
<feature type="helix" evidence="8">
    <location>
        <begin position="529"/>
        <end position="531"/>
    </location>
</feature>
<feature type="strand" evidence="8">
    <location>
        <begin position="533"/>
        <end position="535"/>
    </location>
</feature>